<evidence type="ECO:0000250" key="1"/>
<evidence type="ECO:0000250" key="2">
    <source>
        <dbReference type="UniProtKB" id="Q9P021"/>
    </source>
</evidence>
<evidence type="ECO:0000305" key="3"/>
<reference key="1">
    <citation type="submission" date="2006-02" db="EMBL/GenBank/DDBJ databases">
        <title>Channel catfish gene expression after Edwardsiella ictaluri infection.</title>
        <authorList>
            <person name="Yeh H.-Y."/>
            <person name="Klesius P.H."/>
        </authorList>
    </citation>
    <scope>NUCLEOTIDE SEQUENCE [MRNA]</scope>
    <source>
        <tissue>Ovary</tissue>
    </source>
</reference>
<name>CRIPT_ICTPU</name>
<keyword id="KW-0963">Cytoplasm</keyword>
<keyword id="KW-0507">mRNA processing</keyword>
<keyword id="KW-0508">mRNA splicing</keyword>
<keyword id="KW-0747">Spliceosome</keyword>
<dbReference type="EMBL" id="DQ399518">
    <property type="protein sequence ID" value="ABD85577.1"/>
    <property type="molecule type" value="mRNA"/>
</dbReference>
<dbReference type="RefSeq" id="NP_001232877.1">
    <property type="nucleotide sequence ID" value="NM_001245948.1"/>
</dbReference>
<dbReference type="SMR" id="Q1WCC0"/>
<dbReference type="GeneID" id="100304887"/>
<dbReference type="KEGG" id="ipu:100304887"/>
<dbReference type="CTD" id="9419"/>
<dbReference type="OrthoDB" id="147332at2759"/>
<dbReference type="Proteomes" id="UP000221080">
    <property type="component" value="Chromosome 13"/>
</dbReference>
<dbReference type="GO" id="GO:0005737">
    <property type="term" value="C:cytoplasm"/>
    <property type="evidence" value="ECO:0007669"/>
    <property type="project" value="UniProtKB-SubCell"/>
</dbReference>
<dbReference type="GO" id="GO:0030425">
    <property type="term" value="C:dendrite"/>
    <property type="evidence" value="ECO:0007669"/>
    <property type="project" value="TreeGrafter"/>
</dbReference>
<dbReference type="GO" id="GO:0005681">
    <property type="term" value="C:spliceosomal complex"/>
    <property type="evidence" value="ECO:0007669"/>
    <property type="project" value="UniProtKB-KW"/>
</dbReference>
<dbReference type="GO" id="GO:0008017">
    <property type="term" value="F:microtubule binding"/>
    <property type="evidence" value="ECO:0007669"/>
    <property type="project" value="TreeGrafter"/>
</dbReference>
<dbReference type="GO" id="GO:0030165">
    <property type="term" value="F:PDZ domain binding"/>
    <property type="evidence" value="ECO:0007669"/>
    <property type="project" value="TreeGrafter"/>
</dbReference>
<dbReference type="GO" id="GO:0031122">
    <property type="term" value="P:cytoplasmic microtubule organization"/>
    <property type="evidence" value="ECO:0007669"/>
    <property type="project" value="TreeGrafter"/>
</dbReference>
<dbReference type="GO" id="GO:0006397">
    <property type="term" value="P:mRNA processing"/>
    <property type="evidence" value="ECO:0007669"/>
    <property type="project" value="UniProtKB-KW"/>
</dbReference>
<dbReference type="GO" id="GO:0008380">
    <property type="term" value="P:RNA splicing"/>
    <property type="evidence" value="ECO:0007669"/>
    <property type="project" value="UniProtKB-KW"/>
</dbReference>
<dbReference type="InterPro" id="IPR019367">
    <property type="entry name" value="PDZ-binding_CRIPT"/>
</dbReference>
<dbReference type="PANTHER" id="PTHR11805">
    <property type="entry name" value="CYSTEINE-RICH PDZ-BINDING PROTEIN"/>
    <property type="match status" value="1"/>
</dbReference>
<dbReference type="PANTHER" id="PTHR11805:SF1">
    <property type="entry name" value="CYSTEINE-RICH PDZ-BINDING PROTEIN"/>
    <property type="match status" value="1"/>
</dbReference>
<dbReference type="Pfam" id="PF10235">
    <property type="entry name" value="Cript"/>
    <property type="match status" value="1"/>
</dbReference>
<protein>
    <recommendedName>
        <fullName>Cysteine-rich PDZ-binding protein</fullName>
    </recommendedName>
    <alternativeName>
        <fullName>Cysteine-rich interactor of PDZ three</fullName>
        <shortName>Cysteine-rich interactor of PDZ3</shortName>
    </alternativeName>
</protein>
<comment type="function">
    <text evidence="2">As a component of the minor spliceosome, involved in the splicing of U12-type introns in pre-mRNAs.</text>
</comment>
<comment type="subunit">
    <text evidence="2">Component of the minor spliceosome, which splices U12-type introns.</text>
</comment>
<comment type="subcellular location">
    <subcellularLocation>
        <location evidence="1">Cytoplasm</location>
    </subcellularLocation>
</comment>
<comment type="similarity">
    <text evidence="3">Belongs to the CRIPT family.</text>
</comment>
<gene>
    <name type="primary">cript</name>
</gene>
<organism>
    <name type="scientific">Ictalurus punctatus</name>
    <name type="common">Channel catfish</name>
    <name type="synonym">Silurus punctatus</name>
    <dbReference type="NCBI Taxonomy" id="7998"/>
    <lineage>
        <taxon>Eukaryota</taxon>
        <taxon>Metazoa</taxon>
        <taxon>Chordata</taxon>
        <taxon>Craniata</taxon>
        <taxon>Vertebrata</taxon>
        <taxon>Euteleostomi</taxon>
        <taxon>Actinopterygii</taxon>
        <taxon>Neopterygii</taxon>
        <taxon>Teleostei</taxon>
        <taxon>Ostariophysi</taxon>
        <taxon>Siluriformes</taxon>
        <taxon>Ictaluridae</taxon>
        <taxon>Ictalurus</taxon>
    </lineage>
</organism>
<accession>Q1WCC0</accession>
<proteinExistence type="inferred from homology"/>
<sequence>MVCEKCEKKLGRVITPDTWKDGARNTTESGGRKINENKMLTSKKAGFDPYGKSGFSTCRICKSSVHQSGSHYCQGCAYKKGICAMCGKKVLDTKNYKQTSV</sequence>
<feature type="chain" id="PRO_0000314568" description="Cysteine-rich PDZ-binding protein">
    <location>
        <begin position="1"/>
        <end position="101"/>
    </location>
</feature>